<dbReference type="EMBL" id="CP000031">
    <property type="protein sequence ID" value="AAV97102.1"/>
    <property type="molecule type" value="Genomic_DNA"/>
</dbReference>
<dbReference type="RefSeq" id="WP_011049559.1">
    <property type="nucleotide sequence ID" value="NC_003911.12"/>
</dbReference>
<dbReference type="SMR" id="Q5LLN4"/>
<dbReference type="STRING" id="246200.SPO3888"/>
<dbReference type="PaxDb" id="246200-SPO3888"/>
<dbReference type="KEGG" id="sil:SPO3888"/>
<dbReference type="eggNOG" id="COG1952">
    <property type="taxonomic scope" value="Bacteria"/>
</dbReference>
<dbReference type="HOGENOM" id="CLU_111574_0_0_5"/>
<dbReference type="OrthoDB" id="9795145at2"/>
<dbReference type="Proteomes" id="UP000001023">
    <property type="component" value="Chromosome"/>
</dbReference>
<dbReference type="GO" id="GO:0005737">
    <property type="term" value="C:cytoplasm"/>
    <property type="evidence" value="ECO:0007669"/>
    <property type="project" value="UniProtKB-SubCell"/>
</dbReference>
<dbReference type="GO" id="GO:0051082">
    <property type="term" value="F:unfolded protein binding"/>
    <property type="evidence" value="ECO:0007669"/>
    <property type="project" value="InterPro"/>
</dbReference>
<dbReference type="GO" id="GO:0006457">
    <property type="term" value="P:protein folding"/>
    <property type="evidence" value="ECO:0007669"/>
    <property type="project" value="UniProtKB-UniRule"/>
</dbReference>
<dbReference type="GO" id="GO:0051262">
    <property type="term" value="P:protein tetramerization"/>
    <property type="evidence" value="ECO:0007669"/>
    <property type="project" value="InterPro"/>
</dbReference>
<dbReference type="GO" id="GO:0015031">
    <property type="term" value="P:protein transport"/>
    <property type="evidence" value="ECO:0007669"/>
    <property type="project" value="UniProtKB-UniRule"/>
</dbReference>
<dbReference type="Gene3D" id="3.10.420.10">
    <property type="entry name" value="SecB-like"/>
    <property type="match status" value="1"/>
</dbReference>
<dbReference type="HAMAP" id="MF_00821">
    <property type="entry name" value="SecB"/>
    <property type="match status" value="1"/>
</dbReference>
<dbReference type="InterPro" id="IPR003708">
    <property type="entry name" value="SecB"/>
</dbReference>
<dbReference type="InterPro" id="IPR035958">
    <property type="entry name" value="SecB-like_sf"/>
</dbReference>
<dbReference type="NCBIfam" id="NF004392">
    <property type="entry name" value="PRK05751.1-3"/>
    <property type="match status" value="1"/>
</dbReference>
<dbReference type="NCBIfam" id="TIGR00809">
    <property type="entry name" value="secB"/>
    <property type="match status" value="1"/>
</dbReference>
<dbReference type="PANTHER" id="PTHR36918">
    <property type="match status" value="1"/>
</dbReference>
<dbReference type="PANTHER" id="PTHR36918:SF1">
    <property type="entry name" value="PROTEIN-EXPORT PROTEIN SECB"/>
    <property type="match status" value="1"/>
</dbReference>
<dbReference type="Pfam" id="PF02556">
    <property type="entry name" value="SecB"/>
    <property type="match status" value="1"/>
</dbReference>
<dbReference type="PRINTS" id="PR01594">
    <property type="entry name" value="SECBCHAPRONE"/>
</dbReference>
<dbReference type="SUPFAM" id="SSF54611">
    <property type="entry name" value="SecB-like"/>
    <property type="match status" value="1"/>
</dbReference>
<name>SECB_RUEPO</name>
<evidence type="ECO:0000255" key="1">
    <source>
        <dbReference type="HAMAP-Rule" id="MF_00821"/>
    </source>
</evidence>
<organism>
    <name type="scientific">Ruegeria pomeroyi (strain ATCC 700808 / DSM 15171 / DSS-3)</name>
    <name type="common">Silicibacter pomeroyi</name>
    <dbReference type="NCBI Taxonomy" id="246200"/>
    <lineage>
        <taxon>Bacteria</taxon>
        <taxon>Pseudomonadati</taxon>
        <taxon>Pseudomonadota</taxon>
        <taxon>Alphaproteobacteria</taxon>
        <taxon>Rhodobacterales</taxon>
        <taxon>Roseobacteraceae</taxon>
        <taxon>Ruegeria</taxon>
    </lineage>
</organism>
<keyword id="KW-0143">Chaperone</keyword>
<keyword id="KW-0963">Cytoplasm</keyword>
<keyword id="KW-0653">Protein transport</keyword>
<keyword id="KW-1185">Reference proteome</keyword>
<keyword id="KW-0811">Translocation</keyword>
<keyword id="KW-0813">Transport</keyword>
<comment type="function">
    <text evidence="1">One of the proteins required for the normal export of preproteins out of the cell cytoplasm. It is a molecular chaperone that binds to a subset of precursor proteins, maintaining them in a translocation-competent state. It also specifically binds to its receptor SecA.</text>
</comment>
<comment type="subunit">
    <text evidence="1">Homotetramer, a dimer of dimers. One homotetramer interacts with 1 SecA dimer.</text>
</comment>
<comment type="subcellular location">
    <subcellularLocation>
        <location evidence="1">Cytoplasm</location>
    </subcellularLocation>
</comment>
<comment type="similarity">
    <text evidence="1">Belongs to the SecB family.</text>
</comment>
<reference key="1">
    <citation type="journal article" date="2004" name="Nature">
        <title>Genome sequence of Silicibacter pomeroyi reveals adaptations to the marine environment.</title>
        <authorList>
            <person name="Moran M.A."/>
            <person name="Buchan A."/>
            <person name="Gonzalez J.M."/>
            <person name="Heidelberg J.F."/>
            <person name="Whitman W.B."/>
            <person name="Kiene R.P."/>
            <person name="Henriksen J.R."/>
            <person name="King G.M."/>
            <person name="Belas R."/>
            <person name="Fuqua C."/>
            <person name="Brinkac L.M."/>
            <person name="Lewis M."/>
            <person name="Johri S."/>
            <person name="Weaver B."/>
            <person name="Pai G."/>
            <person name="Eisen J.A."/>
            <person name="Rahe E."/>
            <person name="Sheldon W.M."/>
            <person name="Ye W."/>
            <person name="Miller T.R."/>
            <person name="Carlton J."/>
            <person name="Rasko D.A."/>
            <person name="Paulsen I.T."/>
            <person name="Ren Q."/>
            <person name="Daugherty S.C."/>
            <person name="DeBoy R.T."/>
            <person name="Dodson R.J."/>
            <person name="Durkin A.S."/>
            <person name="Madupu R."/>
            <person name="Nelson W.C."/>
            <person name="Sullivan S.A."/>
            <person name="Rosovitz M.J."/>
            <person name="Haft D.H."/>
            <person name="Selengut J."/>
            <person name="Ward N."/>
        </authorList>
    </citation>
    <scope>NUCLEOTIDE SEQUENCE [LARGE SCALE GENOMIC DNA]</scope>
    <source>
        <strain>ATCC 700808 / DSM 15171 / DSS-3</strain>
    </source>
</reference>
<reference key="2">
    <citation type="journal article" date="2014" name="Stand. Genomic Sci.">
        <title>An updated genome annotation for the model marine bacterium Ruegeria pomeroyi DSS-3.</title>
        <authorList>
            <person name="Rivers A.R."/>
            <person name="Smith C.B."/>
            <person name="Moran M.A."/>
        </authorList>
    </citation>
    <scope>GENOME REANNOTATION</scope>
    <source>
        <strain>ATCC 700808 / DSM 15171 / DSS-3</strain>
    </source>
</reference>
<sequence length="165" mass="18548">MAETDAAAAQQPPQIQMRVLGQFIRDMSFENVMAQRGASGDVQPDVNVQVNLDAKKRSTDNQYEIAIKLNITSKAKGMDDVLFVFEIDYCGIFHVEGVPNEQLHPFLLIECPRMLFPFLRRIVSDITRDGGYPPLNLDNIDFMALYRSELARQQAAAQAEQKADA</sequence>
<feature type="chain" id="PRO_0000055419" description="Protein-export protein SecB">
    <location>
        <begin position="1"/>
        <end position="165"/>
    </location>
</feature>
<accession>Q5LLN4</accession>
<gene>
    <name evidence="1" type="primary">secB</name>
    <name type="ordered locus">SPO3888</name>
</gene>
<proteinExistence type="inferred from homology"/>
<protein>
    <recommendedName>
        <fullName evidence="1">Protein-export protein SecB</fullName>
    </recommendedName>
</protein>